<gene>
    <name type="primary">PA</name>
</gene>
<feature type="chain" id="PRO_0000419367" description="Protein PA-X">
    <location>
        <begin position="1"/>
        <end position="252"/>
    </location>
</feature>
<feature type="active site" evidence="2">
    <location>
        <position position="80"/>
    </location>
</feature>
<feature type="active site" evidence="2">
    <location>
        <position position="108"/>
    </location>
</feature>
<feature type="site" description="Important for efficient shutoff activity and nuclear localization" evidence="4">
    <location>
        <position position="195"/>
    </location>
</feature>
<feature type="site" description="Important for efficient shutoff activity and nuclear localization" evidence="4">
    <location>
        <position position="198"/>
    </location>
</feature>
<feature type="site" description="Important for efficient shutoff activity and nuclear localization" evidence="4">
    <location>
        <position position="199"/>
    </location>
</feature>
<feature type="site" description="Important for efficient shutoff activity" evidence="3">
    <location>
        <position position="202"/>
    </location>
</feature>
<feature type="site" description="Important for efficient shutoff activity" evidence="3">
    <location>
        <position position="203"/>
    </location>
</feature>
<feature type="site" description="Important for efficient shutoff activity" evidence="3">
    <location>
        <position position="206"/>
    </location>
</feature>
<dbReference type="EMBL" id="AY059532">
    <property type="status" value="NOT_ANNOTATED_CDS"/>
    <property type="molecule type" value="Genomic_RNA"/>
</dbReference>
<dbReference type="SMR" id="P0CK84"/>
<dbReference type="Proteomes" id="UP000008285">
    <property type="component" value="Genome"/>
</dbReference>
<dbReference type="GO" id="GO:0003723">
    <property type="term" value="F:RNA binding"/>
    <property type="evidence" value="ECO:0007669"/>
    <property type="project" value="InterPro"/>
</dbReference>
<dbReference type="GO" id="GO:0039694">
    <property type="term" value="P:viral RNA genome replication"/>
    <property type="evidence" value="ECO:0007669"/>
    <property type="project" value="InterPro"/>
</dbReference>
<dbReference type="GO" id="GO:0075523">
    <property type="term" value="P:viral translational frameshifting"/>
    <property type="evidence" value="ECO:0007669"/>
    <property type="project" value="UniProtKB-KW"/>
</dbReference>
<dbReference type="FunFam" id="3.40.91.90:FF:000001">
    <property type="entry name" value="Polymerase acidic protein"/>
    <property type="match status" value="1"/>
</dbReference>
<dbReference type="Gene3D" id="3.40.91.90">
    <property type="entry name" value="Influenza RNA-dependent RNA polymerase subunit PA, endonuclease domain"/>
    <property type="match status" value="1"/>
</dbReference>
<dbReference type="InterPro" id="IPR001009">
    <property type="entry name" value="PA/PA-X"/>
</dbReference>
<dbReference type="InterPro" id="IPR038372">
    <property type="entry name" value="PA/PA-X_sf"/>
</dbReference>
<dbReference type="Pfam" id="PF00603">
    <property type="entry name" value="Flu_PA"/>
    <property type="match status" value="1"/>
</dbReference>
<proteinExistence type="inferred from homology"/>
<comment type="function">
    <text evidence="1 4">Plays a major role in the shutoff of the host protein expression by cleaving mRNAs probably via an endonuclease activity. This host shutoff allows the virus to escape from the host antiviral response (By similarity). Hijacks host RNA splicing machinery to selectively target host RNAs containing introns for destruction. This may explain the preferential degradation of RNAs that have undergone co- or post-transcriptional processing (By similarity).</text>
</comment>
<comment type="subcellular location">
    <subcellularLocation>
        <location evidence="4">Host cytoplasm</location>
    </subcellularLocation>
    <subcellularLocation>
        <location evidence="4">Host nucleus</location>
    </subcellularLocation>
</comment>
<comment type="alternative products">
    <event type="ribosomal frameshifting"/>
    <isoform>
        <id>P0CK84-1</id>
        <name>PA-X</name>
        <sequence type="displayed"/>
    </isoform>
    <isoform>
        <id>Q8QPG0-1</id>
        <name>PA</name>
        <sequence type="external"/>
    </isoform>
</comment>
<comment type="domain">
    <text evidence="1 4">The probable endonuclease active site in the N-terminus and the basic amino acid cluster in the C-terminus are important for the shutoff activity. The C-terminus acts as a nuclear localization signal (By similarity). The C-terminus is recruited to host protein complexes involved in nuclear Pol II RNA processing (By similarity).</text>
</comment>
<comment type="similarity">
    <text evidence="5">Belongs to the influenza viruses PA-X family.</text>
</comment>
<reference key="1">
    <citation type="journal article" date="2002" name="Virology">
        <title>H5N1 influenza viruses isolated from geese in Southeastern China: evidence for genetic reassortment and interspecies transmission to ducks.</title>
        <authorList>
            <person name="Guan Y."/>
            <person name="Peiris M."/>
            <person name="Kong K.F."/>
            <person name="Dyrting K.C."/>
            <person name="Ellis T.M."/>
            <person name="Sit T."/>
            <person name="Zhang L.J."/>
            <person name="Shortridge K.F."/>
        </authorList>
    </citation>
    <scope>NUCLEOTIDE SEQUENCE [GENOMIC RNA]</scope>
</reference>
<accession>P0CK84</accession>
<sequence length="252" mass="29403">MEDFVRQCFNPMIVELAEKAMKEYGEDPKIETNKFAAICTHLEVCFMYSDFHFIDERSESIIVESGDPNALLKHRFEIIEGRDRTMAWTVVNSICNTTGVEKPKFLPDLYDYKENRFIEIGVTRREVHIYYLEKANKIKSEKTHIHIFSFTGEEMATKADYTLDEESRARIKTRLFTIRQEMASRGLWDSFVNPREAKRQLKKDLKSLEPCAGLPTKVSHRTSPALKTLEPMWMDSNRTAALRASFLKCQKK</sequence>
<evidence type="ECO:0000250" key="1">
    <source>
        <dbReference type="UniProtKB" id="P0CK64"/>
    </source>
</evidence>
<evidence type="ECO:0000250" key="2">
    <source>
        <dbReference type="UniProtKB" id="P0CK68"/>
    </source>
</evidence>
<evidence type="ECO:0000250" key="3">
    <source>
        <dbReference type="UniProtKB" id="P0DJW8"/>
    </source>
</evidence>
<evidence type="ECO:0000250" key="4">
    <source>
        <dbReference type="UniProtKB" id="P0DXO5"/>
    </source>
</evidence>
<evidence type="ECO:0000305" key="5"/>
<name>PAX_I00A0</name>
<keyword id="KW-1132">Decay of host mRNAs by virus</keyword>
<keyword id="KW-1262">Eukaryotic host gene expression shutoff by virus</keyword>
<keyword id="KW-1035">Host cytoplasm</keyword>
<keyword id="KW-1190">Host gene expression shutoff by virus</keyword>
<keyword id="KW-1192">Host mRNA suppression by virus</keyword>
<keyword id="KW-1048">Host nucleus</keyword>
<keyword id="KW-0945">Host-virus interaction</keyword>
<keyword id="KW-0688">Ribosomal frameshifting</keyword>
<organismHost>
    <name type="scientific">Aves</name>
    <dbReference type="NCBI Taxonomy" id="8782"/>
</organismHost>
<organismHost>
    <name type="scientific">Felis catus</name>
    <name type="common">Cat</name>
    <name type="synonym">Felis silvestris catus</name>
    <dbReference type="NCBI Taxonomy" id="9685"/>
</organismHost>
<organismHost>
    <name type="scientific">Homo sapiens</name>
    <name type="common">Human</name>
    <dbReference type="NCBI Taxonomy" id="9606"/>
</organismHost>
<organismHost>
    <name type="scientific">Panthera pardus</name>
    <name type="common">Leopard</name>
    <name type="synonym">Felis pardus</name>
    <dbReference type="NCBI Taxonomy" id="9691"/>
</organismHost>
<organismHost>
    <name type="scientific">Panthera tigris</name>
    <name type="common">Tiger</name>
    <dbReference type="NCBI Taxonomy" id="9694"/>
</organismHost>
<organismHost>
    <name type="scientific">Sus scrofa</name>
    <name type="common">Pig</name>
    <dbReference type="NCBI Taxonomy" id="9823"/>
</organismHost>
<protein>
    <recommendedName>
        <fullName>Protein PA-X</fullName>
    </recommendedName>
</protein>
<organism>
    <name type="scientific">Influenza A virus (strain A/Duck/Hong Kong/2986.1/2000 H5N1 genotype C)</name>
    <dbReference type="NCBI Taxonomy" id="176674"/>
    <lineage>
        <taxon>Viruses</taxon>
        <taxon>Riboviria</taxon>
        <taxon>Orthornavirae</taxon>
        <taxon>Negarnaviricota</taxon>
        <taxon>Polyploviricotina</taxon>
        <taxon>Insthoviricetes</taxon>
        <taxon>Articulavirales</taxon>
        <taxon>Orthomyxoviridae</taxon>
        <taxon>Alphainfluenzavirus</taxon>
        <taxon>Alphainfluenzavirus influenzae</taxon>
        <taxon>Influenza A virus</taxon>
    </lineage>
</organism>